<accession>Q98NJ1</accession>
<gene>
    <name evidence="1" type="primary">uppP2</name>
    <name type="synonym">bacA2</name>
    <name type="synonym">upk2</name>
    <name type="ordered locus">mlr0116</name>
</gene>
<sequence>MQGITELLPISSTAHMRIVPALLGWQDPGSAFSAAMQLAALAAVISYFWGDVRDLLFGSLDALTRRDFSDRHFRLASWIVLATIPIVIAGVALSGVLNACNSPLRSLTVIGWSCIAMAILLALAEIFARHKRTIAEASLADALLVGVAQIGALIPGVSRSGSTLTAALGLGFKRAEAARFSFLLGLPAIALAGLKELWELHKVHLDAHGWSVLATGLVVASISAFFAIWGLMRVLERFSAWPFVIYRGLLGVVLLLGLAMGWLA</sequence>
<comment type="function">
    <text evidence="1">Catalyzes the dephosphorylation of undecaprenyl diphosphate (UPP). Confers resistance to bacitracin.</text>
</comment>
<comment type="catalytic activity">
    <reaction evidence="1">
        <text>di-trans,octa-cis-undecaprenyl diphosphate + H2O = di-trans,octa-cis-undecaprenyl phosphate + phosphate + H(+)</text>
        <dbReference type="Rhea" id="RHEA:28094"/>
        <dbReference type="ChEBI" id="CHEBI:15377"/>
        <dbReference type="ChEBI" id="CHEBI:15378"/>
        <dbReference type="ChEBI" id="CHEBI:43474"/>
        <dbReference type="ChEBI" id="CHEBI:58405"/>
        <dbReference type="ChEBI" id="CHEBI:60392"/>
        <dbReference type="EC" id="3.6.1.27"/>
    </reaction>
</comment>
<comment type="subcellular location">
    <subcellularLocation>
        <location evidence="1">Cell inner membrane</location>
        <topology evidence="1">Multi-pass membrane protein</topology>
    </subcellularLocation>
</comment>
<comment type="miscellaneous">
    <text>Bacitracin is thought to be involved in the inhibition of peptidoglycan synthesis by sequestering undecaprenyl diphosphate, thereby reducing the pool of lipid carrier available.</text>
</comment>
<comment type="similarity">
    <text evidence="1">Belongs to the UppP family.</text>
</comment>
<evidence type="ECO:0000255" key="1">
    <source>
        <dbReference type="HAMAP-Rule" id="MF_01006"/>
    </source>
</evidence>
<organism>
    <name type="scientific">Mesorhizobium japonicum (strain LMG 29417 / CECT 9101 / MAFF 303099)</name>
    <name type="common">Mesorhizobium loti (strain MAFF 303099)</name>
    <dbReference type="NCBI Taxonomy" id="266835"/>
    <lineage>
        <taxon>Bacteria</taxon>
        <taxon>Pseudomonadati</taxon>
        <taxon>Pseudomonadota</taxon>
        <taxon>Alphaproteobacteria</taxon>
        <taxon>Hyphomicrobiales</taxon>
        <taxon>Phyllobacteriaceae</taxon>
        <taxon>Mesorhizobium</taxon>
    </lineage>
</organism>
<protein>
    <recommendedName>
        <fullName evidence="1">Undecaprenyl-diphosphatase 2</fullName>
        <ecNumber evidence="1">3.6.1.27</ecNumber>
    </recommendedName>
    <alternativeName>
        <fullName evidence="1">Bacitracin resistance protein 2</fullName>
    </alternativeName>
    <alternativeName>
        <fullName evidence="1">Undecaprenyl pyrophosphate phosphatase 2</fullName>
    </alternativeName>
</protein>
<keyword id="KW-0046">Antibiotic resistance</keyword>
<keyword id="KW-0997">Cell inner membrane</keyword>
<keyword id="KW-1003">Cell membrane</keyword>
<keyword id="KW-0133">Cell shape</keyword>
<keyword id="KW-0961">Cell wall biogenesis/degradation</keyword>
<keyword id="KW-0378">Hydrolase</keyword>
<keyword id="KW-0472">Membrane</keyword>
<keyword id="KW-0573">Peptidoglycan synthesis</keyword>
<keyword id="KW-0812">Transmembrane</keyword>
<keyword id="KW-1133">Transmembrane helix</keyword>
<dbReference type="EC" id="3.6.1.27" evidence="1"/>
<dbReference type="EMBL" id="BA000012">
    <property type="protein sequence ID" value="BAB47770.1"/>
    <property type="molecule type" value="Genomic_DNA"/>
</dbReference>
<dbReference type="SMR" id="Q98NJ1"/>
<dbReference type="KEGG" id="mlo:mlr0116"/>
<dbReference type="eggNOG" id="COG1968">
    <property type="taxonomic scope" value="Bacteria"/>
</dbReference>
<dbReference type="HOGENOM" id="CLU_060296_1_0_5"/>
<dbReference type="Proteomes" id="UP000000552">
    <property type="component" value="Chromosome"/>
</dbReference>
<dbReference type="GO" id="GO:0005886">
    <property type="term" value="C:plasma membrane"/>
    <property type="evidence" value="ECO:0007669"/>
    <property type="project" value="UniProtKB-SubCell"/>
</dbReference>
<dbReference type="GO" id="GO:0050380">
    <property type="term" value="F:undecaprenyl-diphosphatase activity"/>
    <property type="evidence" value="ECO:0007669"/>
    <property type="project" value="UniProtKB-UniRule"/>
</dbReference>
<dbReference type="GO" id="GO:0071555">
    <property type="term" value="P:cell wall organization"/>
    <property type="evidence" value="ECO:0007669"/>
    <property type="project" value="UniProtKB-KW"/>
</dbReference>
<dbReference type="GO" id="GO:0009252">
    <property type="term" value="P:peptidoglycan biosynthetic process"/>
    <property type="evidence" value="ECO:0007669"/>
    <property type="project" value="UniProtKB-KW"/>
</dbReference>
<dbReference type="GO" id="GO:0008360">
    <property type="term" value="P:regulation of cell shape"/>
    <property type="evidence" value="ECO:0007669"/>
    <property type="project" value="UniProtKB-KW"/>
</dbReference>
<dbReference type="GO" id="GO:0046677">
    <property type="term" value="P:response to antibiotic"/>
    <property type="evidence" value="ECO:0007669"/>
    <property type="project" value="UniProtKB-UniRule"/>
</dbReference>
<dbReference type="HAMAP" id="MF_01006">
    <property type="entry name" value="Undec_diphosphatase"/>
    <property type="match status" value="1"/>
</dbReference>
<dbReference type="InterPro" id="IPR003824">
    <property type="entry name" value="UppP"/>
</dbReference>
<dbReference type="PANTHER" id="PTHR30622">
    <property type="entry name" value="UNDECAPRENYL-DIPHOSPHATASE"/>
    <property type="match status" value="1"/>
</dbReference>
<dbReference type="PANTHER" id="PTHR30622:SF4">
    <property type="entry name" value="UNDECAPRENYL-DIPHOSPHATASE"/>
    <property type="match status" value="1"/>
</dbReference>
<dbReference type="Pfam" id="PF02673">
    <property type="entry name" value="BacA"/>
    <property type="match status" value="1"/>
</dbReference>
<proteinExistence type="inferred from homology"/>
<reference key="1">
    <citation type="journal article" date="2000" name="DNA Res.">
        <title>Complete genome structure of the nitrogen-fixing symbiotic bacterium Mesorhizobium loti.</title>
        <authorList>
            <person name="Kaneko T."/>
            <person name="Nakamura Y."/>
            <person name="Sato S."/>
            <person name="Asamizu E."/>
            <person name="Kato T."/>
            <person name="Sasamoto S."/>
            <person name="Watanabe A."/>
            <person name="Idesawa K."/>
            <person name="Ishikawa A."/>
            <person name="Kawashima K."/>
            <person name="Kimura T."/>
            <person name="Kishida Y."/>
            <person name="Kiyokawa C."/>
            <person name="Kohara M."/>
            <person name="Matsumoto M."/>
            <person name="Matsuno A."/>
            <person name="Mochizuki Y."/>
            <person name="Nakayama S."/>
            <person name="Nakazaki N."/>
            <person name="Shimpo S."/>
            <person name="Sugimoto M."/>
            <person name="Takeuchi C."/>
            <person name="Yamada M."/>
            <person name="Tabata S."/>
        </authorList>
    </citation>
    <scope>NUCLEOTIDE SEQUENCE [LARGE SCALE GENOMIC DNA]</scope>
    <source>
        <strain>LMG 29417 / CECT 9101 / MAFF 303099</strain>
    </source>
</reference>
<feature type="chain" id="PRO_0000151186" description="Undecaprenyl-diphosphatase 2">
    <location>
        <begin position="1"/>
        <end position="264"/>
    </location>
</feature>
<feature type="transmembrane region" description="Helical" evidence="1">
    <location>
        <begin position="29"/>
        <end position="49"/>
    </location>
</feature>
<feature type="transmembrane region" description="Helical" evidence="1">
    <location>
        <begin position="77"/>
        <end position="97"/>
    </location>
</feature>
<feature type="transmembrane region" description="Helical" evidence="1">
    <location>
        <begin position="107"/>
        <end position="127"/>
    </location>
</feature>
<feature type="transmembrane region" description="Helical" evidence="1">
    <location>
        <begin position="137"/>
        <end position="157"/>
    </location>
</feature>
<feature type="transmembrane region" description="Helical" evidence="1">
    <location>
        <begin position="180"/>
        <end position="200"/>
    </location>
</feature>
<feature type="transmembrane region" description="Helical" evidence="1">
    <location>
        <begin position="212"/>
        <end position="232"/>
    </location>
</feature>
<feature type="transmembrane region" description="Helical" evidence="1">
    <location>
        <begin position="243"/>
        <end position="263"/>
    </location>
</feature>
<name>UPPP2_RHILO</name>